<sequence>MALEMRLPVARKPLSESLGRESKKHLVVPGDTITTDTGFMRGHGTYMGEEKLIASVAGSVERVNKLICVKALKTRYNGEVGDIVVGRITEVQQKRWKVETNSRLDSVLLLSSMNLPGGELRRRSAEDELAMRGFLQEGDLISAEVQAVFSDGAVSLHTRSLKYGKLGQGVLVQVSPSLVKRQKTHFHDLPCGASVILGNNGFIWVYPTPEHKEDDAGGFIANLEPVSLTDREVISRLRNCIVSLATQRMMLYDTSILYCYEASLPHQIKDILKPEIMEEIVMETRQRLLEQEG</sequence>
<comment type="function">
    <text evidence="1">Non-catalytic component of the RNA exosome complex which has 3'-&gt;5' exoribonuclease activity and participates in a multitude of cellular RNA processing and degradation events. In the nucleus, the RNA exosome complex is involved in proper maturation of stable RNA species such as rRNA, snRNA and snoRNA, in the elimination of RNA processing by-products and non-coding 'pervasive' transcripts, such as antisense RNA species and promoter-upstream transcripts (PROMPTs), and of mRNAs with processing defects, thereby limiting or excluding their export to the cytoplasm. The RNA exosome may be involved in Ig class switch recombination (CSR) and/or Ig variable region somatic hypermutation (SHM) by targeting AICDA deamination activity to transcribed dsDNA substrates. In the cytoplasm, the RNA exosome complex is involved in general mRNA turnover and specifically degrades inherently unstable mRNAs containing AU-rich elements (AREs) within their 3' untranslated regions, and in RNA surveillance pathways, preventing translation of aberrant mRNAs. It seems to be involved in degradation of histone mRNA. The catalytic inactive RNA exosome core complex of 9 subunits (Exo-9) is proposed to play a pivotal role in the binding and presentation of RNA for ribonucleolysis, and to serve as a scaffold for the association with catalytic subunits and accessory proteins or complexes. EXOSC2 as peripheral part of the Exo-9 complex stabilizes the hexameric ring of RNase PH-domain subunits through contacts with EXOSC4 and EXOSC7 (By similarity).</text>
</comment>
<comment type="subunit">
    <text evidence="1">Component of the RNA exosome core complex (Exo-9), composed of EXOSC1, EXOSC2, EXOSC3, EXOSC4, EXOSC5, EXOSC6, EXOSC7, EXOSC8 and EXOSC9; within the complex interacts with EXOSC4 and EXOSC7 (By similarity). The catalytically inactive RNA exosome core complex (Exo-9) associates with the catalytic subunit EXOSC10/RRP6 (By similarity). Exo-9 may associate with DIS3 to form the nucleolar exosome complex, or DIS3L to form the cytoplasmic exosome complex (By similarity). Exo-9 is formed by a hexameric base ring consisting of the heterodimers EXOSC4-EXOSC9, EXOSC5-EXOSC8 and EXOSC6-EXOSC7, and a cap ring consisting of EXOSC1, EXOSC2 and EXOSC3 (By similarity). The RNA exosome complex associates with cofactors C1D/RRP47, MPHOSPH6/MPP6 and MTREX/MTR4 (By similarity). Interacts with GTPBP1 (By similarity). Interacts with ZFP36L1 (via N-terminus) (By similarity).</text>
</comment>
<comment type="subcellular location">
    <subcellularLocation>
        <location evidence="1">Cytoplasm</location>
    </subcellularLocation>
    <subcellularLocation>
        <location evidence="1">Nucleus</location>
        <location evidence="1">Nucleolus</location>
    </subcellularLocation>
    <subcellularLocation>
        <location evidence="1">Nucleus</location>
    </subcellularLocation>
</comment>
<comment type="similarity">
    <text evidence="2">Belongs to the RRP4 family.</text>
</comment>
<keyword id="KW-0963">Cytoplasm</keyword>
<keyword id="KW-0271">Exosome</keyword>
<keyword id="KW-0539">Nucleus</keyword>
<keyword id="KW-0597">Phosphoprotein</keyword>
<keyword id="KW-1185">Reference proteome</keyword>
<keyword id="KW-0694">RNA-binding</keyword>
<keyword id="KW-0698">rRNA processing</keyword>
<name>EXOS2_BOVIN</name>
<reference key="1">
    <citation type="submission" date="2006-01" db="EMBL/GenBank/DDBJ databases">
        <authorList>
            <consortium name="NIH - Mammalian Gene Collection (MGC) project"/>
        </authorList>
    </citation>
    <scope>NUCLEOTIDE SEQUENCE [LARGE SCALE MRNA]</scope>
    <source>
        <strain>Hereford</strain>
        <tissue>Hypothalamus</tissue>
    </source>
</reference>
<dbReference type="EMBL" id="BC112683">
    <property type="protein sequence ID" value="AAI12684.1"/>
    <property type="molecule type" value="mRNA"/>
</dbReference>
<dbReference type="RefSeq" id="NP_001040026.1">
    <property type="nucleotide sequence ID" value="NM_001046561.2"/>
</dbReference>
<dbReference type="SMR" id="Q2KID0"/>
<dbReference type="FunCoup" id="Q2KID0">
    <property type="interactions" value="4131"/>
</dbReference>
<dbReference type="STRING" id="9913.ENSBTAP00000070411"/>
<dbReference type="PaxDb" id="9913-ENSBTAP00000053924"/>
<dbReference type="Ensembl" id="ENSBTAT00000072388.2">
    <property type="protein sequence ID" value="ENSBTAP00000070411.1"/>
    <property type="gene ID" value="ENSBTAG00000048071.3"/>
</dbReference>
<dbReference type="GeneID" id="615712"/>
<dbReference type="KEGG" id="bta:615712"/>
<dbReference type="CTD" id="23404"/>
<dbReference type="VEuPathDB" id="HostDB:ENSBTAG00000048071"/>
<dbReference type="VGNC" id="VGNC:28657">
    <property type="gene designation" value="EXOSC2"/>
</dbReference>
<dbReference type="eggNOG" id="KOG3013">
    <property type="taxonomic scope" value="Eukaryota"/>
</dbReference>
<dbReference type="GeneTree" id="ENSGT00940000153596"/>
<dbReference type="HOGENOM" id="CLU_034114_3_1_1"/>
<dbReference type="InParanoid" id="Q2KID0"/>
<dbReference type="OMA" id="GVNGFIW"/>
<dbReference type="OrthoDB" id="1650at2759"/>
<dbReference type="TreeFam" id="TF105623"/>
<dbReference type="Reactome" id="R-BTA-429958">
    <property type="pathway name" value="mRNA decay by 3' to 5' exoribonuclease"/>
</dbReference>
<dbReference type="Reactome" id="R-BTA-450385">
    <property type="pathway name" value="Butyrate Response Factor 1 (BRF1) binds and destabilizes mRNA"/>
</dbReference>
<dbReference type="Reactome" id="R-BTA-450513">
    <property type="pathway name" value="Tristetraprolin (TTP, ZFP36) binds and destabilizes mRNA"/>
</dbReference>
<dbReference type="Reactome" id="R-BTA-450604">
    <property type="pathway name" value="KSRP (KHSRP) binds and destabilizes mRNA"/>
</dbReference>
<dbReference type="Reactome" id="R-BTA-6791226">
    <property type="pathway name" value="Major pathway of rRNA processing in the nucleolus and cytosol"/>
</dbReference>
<dbReference type="CD-CODE" id="D7FE2080">
    <property type="entry name" value="Nucleolus"/>
</dbReference>
<dbReference type="Proteomes" id="UP000009136">
    <property type="component" value="Chromosome 11"/>
</dbReference>
<dbReference type="Bgee" id="ENSBTAG00000048071">
    <property type="expression patterns" value="Expressed in caput epididymis and 108 other cell types or tissues"/>
</dbReference>
<dbReference type="GO" id="GO:0000177">
    <property type="term" value="C:cytoplasmic exosome (RNase complex)"/>
    <property type="evidence" value="ECO:0000318"/>
    <property type="project" value="GO_Central"/>
</dbReference>
<dbReference type="GO" id="GO:0005829">
    <property type="term" value="C:cytosol"/>
    <property type="evidence" value="ECO:0007669"/>
    <property type="project" value="Ensembl"/>
</dbReference>
<dbReference type="GO" id="GO:0000178">
    <property type="term" value="C:exosome (RNase complex)"/>
    <property type="evidence" value="ECO:0000250"/>
    <property type="project" value="UniProtKB"/>
</dbReference>
<dbReference type="GO" id="GO:0000176">
    <property type="term" value="C:nuclear exosome (RNase complex)"/>
    <property type="evidence" value="ECO:0000318"/>
    <property type="project" value="GO_Central"/>
</dbReference>
<dbReference type="GO" id="GO:0005730">
    <property type="term" value="C:nucleolus"/>
    <property type="evidence" value="ECO:0007669"/>
    <property type="project" value="UniProtKB-SubCell"/>
</dbReference>
<dbReference type="GO" id="GO:0005654">
    <property type="term" value="C:nucleoplasm"/>
    <property type="evidence" value="ECO:0007669"/>
    <property type="project" value="Ensembl"/>
</dbReference>
<dbReference type="GO" id="GO:0003723">
    <property type="term" value="F:RNA binding"/>
    <property type="evidence" value="ECO:0000318"/>
    <property type="project" value="GO_Central"/>
</dbReference>
<dbReference type="GO" id="GO:0071034">
    <property type="term" value="P:CUT catabolic process"/>
    <property type="evidence" value="ECO:0000318"/>
    <property type="project" value="GO_Central"/>
</dbReference>
<dbReference type="GO" id="GO:0000467">
    <property type="term" value="P:exonucleolytic trimming to generate mature 3'-end of 5.8S rRNA from tricistronic rRNA transcript (SSU-rRNA, 5.8S rRNA, LSU-rRNA)"/>
    <property type="evidence" value="ECO:0000318"/>
    <property type="project" value="GO_Central"/>
</dbReference>
<dbReference type="GO" id="GO:0071035">
    <property type="term" value="P:nuclear polyadenylation-dependent rRNA catabolic process"/>
    <property type="evidence" value="ECO:0000318"/>
    <property type="project" value="GO_Central"/>
</dbReference>
<dbReference type="GO" id="GO:0000956">
    <property type="term" value="P:nuclear-transcribed mRNA catabolic process"/>
    <property type="evidence" value="ECO:0000318"/>
    <property type="project" value="GO_Central"/>
</dbReference>
<dbReference type="GO" id="GO:0071051">
    <property type="term" value="P:poly(A)-dependent snoRNA 3'-end processing"/>
    <property type="evidence" value="ECO:0000318"/>
    <property type="project" value="GO_Central"/>
</dbReference>
<dbReference type="GO" id="GO:0030307">
    <property type="term" value="P:positive regulation of cell growth"/>
    <property type="evidence" value="ECO:0007669"/>
    <property type="project" value="Ensembl"/>
</dbReference>
<dbReference type="GO" id="GO:0071038">
    <property type="term" value="P:TRAMP-dependent tRNA surveillance pathway"/>
    <property type="evidence" value="ECO:0000318"/>
    <property type="project" value="GO_Central"/>
</dbReference>
<dbReference type="GO" id="GO:0034475">
    <property type="term" value="P:U4 snRNA 3'-end processing"/>
    <property type="evidence" value="ECO:0000318"/>
    <property type="project" value="GO_Central"/>
</dbReference>
<dbReference type="CDD" id="cd22525">
    <property type="entry name" value="KH-I_Rrp4_eukar"/>
    <property type="match status" value="1"/>
</dbReference>
<dbReference type="CDD" id="cd05789">
    <property type="entry name" value="S1_Rrp4"/>
    <property type="match status" value="1"/>
</dbReference>
<dbReference type="FunFam" id="2.40.50.100:FF:000022">
    <property type="entry name" value="Exosome complex component RRP4"/>
    <property type="match status" value="1"/>
</dbReference>
<dbReference type="FunFam" id="2.40.50.140:FF:000038">
    <property type="entry name" value="Exosome complex component RRP4"/>
    <property type="match status" value="1"/>
</dbReference>
<dbReference type="Gene3D" id="2.40.50.100">
    <property type="match status" value="1"/>
</dbReference>
<dbReference type="Gene3D" id="2.40.50.140">
    <property type="entry name" value="Nucleic acid-binding proteins"/>
    <property type="match status" value="1"/>
</dbReference>
<dbReference type="InterPro" id="IPR025721">
    <property type="entry name" value="Exosome_cplx_N_dom"/>
</dbReference>
<dbReference type="InterPro" id="IPR026699">
    <property type="entry name" value="Exosome_RNA_bind1/RRP40/RRP4"/>
</dbReference>
<dbReference type="InterPro" id="IPR004088">
    <property type="entry name" value="KH_dom_type_1"/>
</dbReference>
<dbReference type="InterPro" id="IPR036612">
    <property type="entry name" value="KH_dom_type_1_sf"/>
</dbReference>
<dbReference type="InterPro" id="IPR012340">
    <property type="entry name" value="NA-bd_OB-fold"/>
</dbReference>
<dbReference type="InterPro" id="IPR048565">
    <property type="entry name" value="RRP4_S1"/>
</dbReference>
<dbReference type="PANTHER" id="PTHR21321:SF4">
    <property type="entry name" value="EXOSOME COMPLEX COMPONENT RRP4"/>
    <property type="match status" value="1"/>
</dbReference>
<dbReference type="PANTHER" id="PTHR21321">
    <property type="entry name" value="PNAS-3 RELATED"/>
    <property type="match status" value="1"/>
</dbReference>
<dbReference type="Pfam" id="PF14382">
    <property type="entry name" value="ECR1_N"/>
    <property type="match status" value="1"/>
</dbReference>
<dbReference type="Pfam" id="PF15985">
    <property type="entry name" value="KH_6"/>
    <property type="match status" value="1"/>
</dbReference>
<dbReference type="Pfam" id="PF21266">
    <property type="entry name" value="RRP4_S1"/>
    <property type="match status" value="1"/>
</dbReference>
<dbReference type="SUPFAM" id="SSF54791">
    <property type="entry name" value="Eukaryotic type KH-domain (KH-domain type I)"/>
    <property type="match status" value="1"/>
</dbReference>
<dbReference type="SUPFAM" id="SSF50249">
    <property type="entry name" value="Nucleic acid-binding proteins"/>
    <property type="match status" value="1"/>
</dbReference>
<dbReference type="SUPFAM" id="SSF110324">
    <property type="entry name" value="Ribosomal L27 protein-like"/>
    <property type="match status" value="1"/>
</dbReference>
<accession>Q2KID0</accession>
<protein>
    <recommendedName>
        <fullName>Exosome complex component RRP4</fullName>
    </recommendedName>
    <alternativeName>
        <fullName>Exosome component 2</fullName>
    </alternativeName>
    <alternativeName>
        <fullName>Ribosomal RNA-processing protein 4</fullName>
    </alternativeName>
</protein>
<organism>
    <name type="scientific">Bos taurus</name>
    <name type="common">Bovine</name>
    <dbReference type="NCBI Taxonomy" id="9913"/>
    <lineage>
        <taxon>Eukaryota</taxon>
        <taxon>Metazoa</taxon>
        <taxon>Chordata</taxon>
        <taxon>Craniata</taxon>
        <taxon>Vertebrata</taxon>
        <taxon>Euteleostomi</taxon>
        <taxon>Mammalia</taxon>
        <taxon>Eutheria</taxon>
        <taxon>Laurasiatheria</taxon>
        <taxon>Artiodactyla</taxon>
        <taxon>Ruminantia</taxon>
        <taxon>Pecora</taxon>
        <taxon>Bovidae</taxon>
        <taxon>Bovinae</taxon>
        <taxon>Bos</taxon>
    </lineage>
</organism>
<feature type="chain" id="PRO_0000287528" description="Exosome complex component RRP4">
    <location>
        <begin position="1"/>
        <end position="293"/>
    </location>
</feature>
<feature type="domain" description="S1 motif">
    <location>
        <begin position="79"/>
        <end position="159"/>
    </location>
</feature>
<feature type="modified residue" description="Phosphoserine" evidence="1">
    <location>
        <position position="124"/>
    </location>
</feature>
<proteinExistence type="evidence at transcript level"/>
<gene>
    <name type="primary">EXOSC2</name>
    <name type="synonym">RRP4</name>
</gene>
<evidence type="ECO:0000250" key="1">
    <source>
        <dbReference type="UniProtKB" id="Q13868"/>
    </source>
</evidence>
<evidence type="ECO:0000305" key="2"/>